<sequence>MTEATYYFIGIKGSGMSALALVLHDLGHQVLGSDITQYTFTQKGLAAAGIKMLPFDPANLKPGYTVIAGNSFTDDHPEIKRAKELGLTIYRYHEFLGKLIEGYTSIGVAGAHGKTSTTGLLAHTLSGVAKTSYLIGDGTGKGIPDSKFFVFEADEYRRHFLAYHPDYMIMTNIDFDHPDYYTGFEDVYDAFETEANQVKKAIVAWGDDPWLRKLKAKVPVYYYGISDRDDFQARNVDRDTKGSSFDAYFHDQLIGHFFVPLFGEHSVLNALAVVAVAHMEKLDAKLIARELGNFSGVKRRFAEKDLKDMIIVDDYAHHPNEIKATLDAARQKYPDKAIIAVFQPHTFSRTQAYEPQYVQVLSQADQTFLTPIFSSAREKTGKIRSEDITAQIKGAAVIHQEDMKPLLQYHNAVVVFMGAGDIQKYEKAYETILAEE</sequence>
<dbReference type="EC" id="6.3.2.8" evidence="1"/>
<dbReference type="EMBL" id="CP000423">
    <property type="protein sequence ID" value="ABJ70484.1"/>
    <property type="molecule type" value="Genomic_DNA"/>
</dbReference>
<dbReference type="RefSeq" id="WP_003565897.1">
    <property type="nucleotide sequence ID" value="NC_008526.1"/>
</dbReference>
<dbReference type="RefSeq" id="YP_806926.1">
    <property type="nucleotide sequence ID" value="NC_008526.1"/>
</dbReference>
<dbReference type="SMR" id="Q037Y8"/>
<dbReference type="STRING" id="321967.LSEI_1711"/>
<dbReference type="PaxDb" id="321967-LSEI_1711"/>
<dbReference type="GeneID" id="57090414"/>
<dbReference type="KEGG" id="lca:LSEI_1711"/>
<dbReference type="PATRIC" id="fig|321967.11.peg.1691"/>
<dbReference type="HOGENOM" id="CLU_028104_1_0_9"/>
<dbReference type="UniPathway" id="UPA00219"/>
<dbReference type="Proteomes" id="UP000001651">
    <property type="component" value="Chromosome"/>
</dbReference>
<dbReference type="GO" id="GO:0005737">
    <property type="term" value="C:cytoplasm"/>
    <property type="evidence" value="ECO:0007669"/>
    <property type="project" value="UniProtKB-SubCell"/>
</dbReference>
<dbReference type="GO" id="GO:0005524">
    <property type="term" value="F:ATP binding"/>
    <property type="evidence" value="ECO:0007669"/>
    <property type="project" value="UniProtKB-UniRule"/>
</dbReference>
<dbReference type="GO" id="GO:0008763">
    <property type="term" value="F:UDP-N-acetylmuramate-L-alanine ligase activity"/>
    <property type="evidence" value="ECO:0007669"/>
    <property type="project" value="UniProtKB-UniRule"/>
</dbReference>
<dbReference type="GO" id="GO:0051301">
    <property type="term" value="P:cell division"/>
    <property type="evidence" value="ECO:0007669"/>
    <property type="project" value="UniProtKB-KW"/>
</dbReference>
<dbReference type="GO" id="GO:0071555">
    <property type="term" value="P:cell wall organization"/>
    <property type="evidence" value="ECO:0007669"/>
    <property type="project" value="UniProtKB-KW"/>
</dbReference>
<dbReference type="GO" id="GO:0009252">
    <property type="term" value="P:peptidoglycan biosynthetic process"/>
    <property type="evidence" value="ECO:0007669"/>
    <property type="project" value="UniProtKB-UniRule"/>
</dbReference>
<dbReference type="GO" id="GO:0008360">
    <property type="term" value="P:regulation of cell shape"/>
    <property type="evidence" value="ECO:0007669"/>
    <property type="project" value="UniProtKB-KW"/>
</dbReference>
<dbReference type="Gene3D" id="3.90.190.20">
    <property type="entry name" value="Mur ligase, C-terminal domain"/>
    <property type="match status" value="1"/>
</dbReference>
<dbReference type="Gene3D" id="3.40.1190.10">
    <property type="entry name" value="Mur-like, catalytic domain"/>
    <property type="match status" value="1"/>
</dbReference>
<dbReference type="Gene3D" id="3.40.50.720">
    <property type="entry name" value="NAD(P)-binding Rossmann-like Domain"/>
    <property type="match status" value="1"/>
</dbReference>
<dbReference type="HAMAP" id="MF_00046">
    <property type="entry name" value="MurC"/>
    <property type="match status" value="1"/>
</dbReference>
<dbReference type="InterPro" id="IPR036565">
    <property type="entry name" value="Mur-like_cat_sf"/>
</dbReference>
<dbReference type="InterPro" id="IPR004101">
    <property type="entry name" value="Mur_ligase_C"/>
</dbReference>
<dbReference type="InterPro" id="IPR036615">
    <property type="entry name" value="Mur_ligase_C_dom_sf"/>
</dbReference>
<dbReference type="InterPro" id="IPR013221">
    <property type="entry name" value="Mur_ligase_cen"/>
</dbReference>
<dbReference type="InterPro" id="IPR000713">
    <property type="entry name" value="Mur_ligase_N"/>
</dbReference>
<dbReference type="InterPro" id="IPR050061">
    <property type="entry name" value="MurCDEF_pg_biosynth"/>
</dbReference>
<dbReference type="InterPro" id="IPR005758">
    <property type="entry name" value="UDP-N-AcMur_Ala_ligase_MurC"/>
</dbReference>
<dbReference type="NCBIfam" id="TIGR01082">
    <property type="entry name" value="murC"/>
    <property type="match status" value="1"/>
</dbReference>
<dbReference type="PANTHER" id="PTHR43445:SF3">
    <property type="entry name" value="UDP-N-ACETYLMURAMATE--L-ALANINE LIGASE"/>
    <property type="match status" value="1"/>
</dbReference>
<dbReference type="PANTHER" id="PTHR43445">
    <property type="entry name" value="UDP-N-ACETYLMURAMATE--L-ALANINE LIGASE-RELATED"/>
    <property type="match status" value="1"/>
</dbReference>
<dbReference type="Pfam" id="PF01225">
    <property type="entry name" value="Mur_ligase"/>
    <property type="match status" value="1"/>
</dbReference>
<dbReference type="Pfam" id="PF02875">
    <property type="entry name" value="Mur_ligase_C"/>
    <property type="match status" value="1"/>
</dbReference>
<dbReference type="Pfam" id="PF08245">
    <property type="entry name" value="Mur_ligase_M"/>
    <property type="match status" value="1"/>
</dbReference>
<dbReference type="SUPFAM" id="SSF51984">
    <property type="entry name" value="MurCD N-terminal domain"/>
    <property type="match status" value="1"/>
</dbReference>
<dbReference type="SUPFAM" id="SSF53623">
    <property type="entry name" value="MurD-like peptide ligases, catalytic domain"/>
    <property type="match status" value="1"/>
</dbReference>
<dbReference type="SUPFAM" id="SSF53244">
    <property type="entry name" value="MurD-like peptide ligases, peptide-binding domain"/>
    <property type="match status" value="1"/>
</dbReference>
<gene>
    <name evidence="1" type="primary">murC</name>
    <name type="ordered locus">LSEI_1711</name>
</gene>
<proteinExistence type="inferred from homology"/>
<name>MURC_LACP3</name>
<protein>
    <recommendedName>
        <fullName evidence="1">UDP-N-acetylmuramate--L-alanine ligase</fullName>
        <ecNumber evidence="1">6.3.2.8</ecNumber>
    </recommendedName>
    <alternativeName>
        <fullName evidence="1">UDP-N-acetylmuramoyl-L-alanine synthetase</fullName>
    </alternativeName>
</protein>
<comment type="function">
    <text evidence="1">Cell wall formation.</text>
</comment>
<comment type="catalytic activity">
    <reaction evidence="1">
        <text>UDP-N-acetyl-alpha-D-muramate + L-alanine + ATP = UDP-N-acetyl-alpha-D-muramoyl-L-alanine + ADP + phosphate + H(+)</text>
        <dbReference type="Rhea" id="RHEA:23372"/>
        <dbReference type="ChEBI" id="CHEBI:15378"/>
        <dbReference type="ChEBI" id="CHEBI:30616"/>
        <dbReference type="ChEBI" id="CHEBI:43474"/>
        <dbReference type="ChEBI" id="CHEBI:57972"/>
        <dbReference type="ChEBI" id="CHEBI:70757"/>
        <dbReference type="ChEBI" id="CHEBI:83898"/>
        <dbReference type="ChEBI" id="CHEBI:456216"/>
        <dbReference type="EC" id="6.3.2.8"/>
    </reaction>
</comment>
<comment type="pathway">
    <text evidence="1">Cell wall biogenesis; peptidoglycan biosynthesis.</text>
</comment>
<comment type="subcellular location">
    <subcellularLocation>
        <location evidence="1">Cytoplasm</location>
    </subcellularLocation>
</comment>
<comment type="similarity">
    <text evidence="1">Belongs to the MurCDEF family.</text>
</comment>
<organism>
    <name type="scientific">Lacticaseibacillus paracasei (strain ATCC 334 / BCRC 17002 / CCUG 31169 / CIP 107868 / KCTC 3260 / NRRL B-441)</name>
    <name type="common">Lactobacillus paracasei</name>
    <dbReference type="NCBI Taxonomy" id="321967"/>
    <lineage>
        <taxon>Bacteria</taxon>
        <taxon>Bacillati</taxon>
        <taxon>Bacillota</taxon>
        <taxon>Bacilli</taxon>
        <taxon>Lactobacillales</taxon>
        <taxon>Lactobacillaceae</taxon>
        <taxon>Lacticaseibacillus</taxon>
    </lineage>
</organism>
<reference key="1">
    <citation type="journal article" date="2006" name="Proc. Natl. Acad. Sci. U.S.A.">
        <title>Comparative genomics of the lactic acid bacteria.</title>
        <authorList>
            <person name="Makarova K.S."/>
            <person name="Slesarev A."/>
            <person name="Wolf Y.I."/>
            <person name="Sorokin A."/>
            <person name="Mirkin B."/>
            <person name="Koonin E.V."/>
            <person name="Pavlov A."/>
            <person name="Pavlova N."/>
            <person name="Karamychev V."/>
            <person name="Polouchine N."/>
            <person name="Shakhova V."/>
            <person name="Grigoriev I."/>
            <person name="Lou Y."/>
            <person name="Rohksar D."/>
            <person name="Lucas S."/>
            <person name="Huang K."/>
            <person name="Goodstein D.M."/>
            <person name="Hawkins T."/>
            <person name="Plengvidhya V."/>
            <person name="Welker D."/>
            <person name="Hughes J."/>
            <person name="Goh Y."/>
            <person name="Benson A."/>
            <person name="Baldwin K."/>
            <person name="Lee J.-H."/>
            <person name="Diaz-Muniz I."/>
            <person name="Dosti B."/>
            <person name="Smeianov V."/>
            <person name="Wechter W."/>
            <person name="Barabote R."/>
            <person name="Lorca G."/>
            <person name="Altermann E."/>
            <person name="Barrangou R."/>
            <person name="Ganesan B."/>
            <person name="Xie Y."/>
            <person name="Rawsthorne H."/>
            <person name="Tamir D."/>
            <person name="Parker C."/>
            <person name="Breidt F."/>
            <person name="Broadbent J.R."/>
            <person name="Hutkins R."/>
            <person name="O'Sullivan D."/>
            <person name="Steele J."/>
            <person name="Unlu G."/>
            <person name="Saier M.H. Jr."/>
            <person name="Klaenhammer T."/>
            <person name="Richardson P."/>
            <person name="Kozyavkin S."/>
            <person name="Weimer B.C."/>
            <person name="Mills D.A."/>
        </authorList>
    </citation>
    <scope>NUCLEOTIDE SEQUENCE [LARGE SCALE GENOMIC DNA]</scope>
    <source>
        <strain>ATCC 334 / BCRC 17002 / CCUG 31169 / CIP 107868 / KCTC 3260 / NRRL B-441</strain>
    </source>
</reference>
<evidence type="ECO:0000255" key="1">
    <source>
        <dbReference type="HAMAP-Rule" id="MF_00046"/>
    </source>
</evidence>
<accession>Q037Y8</accession>
<feature type="chain" id="PRO_0000336838" description="UDP-N-acetylmuramate--L-alanine ligase">
    <location>
        <begin position="1"/>
        <end position="436"/>
    </location>
</feature>
<feature type="binding site" evidence="1">
    <location>
        <begin position="110"/>
        <end position="116"/>
    </location>
    <ligand>
        <name>ATP</name>
        <dbReference type="ChEBI" id="CHEBI:30616"/>
    </ligand>
</feature>
<keyword id="KW-0067">ATP-binding</keyword>
<keyword id="KW-0131">Cell cycle</keyword>
<keyword id="KW-0132">Cell division</keyword>
<keyword id="KW-0133">Cell shape</keyword>
<keyword id="KW-0961">Cell wall biogenesis/degradation</keyword>
<keyword id="KW-0963">Cytoplasm</keyword>
<keyword id="KW-0436">Ligase</keyword>
<keyword id="KW-0547">Nucleotide-binding</keyword>
<keyword id="KW-0573">Peptidoglycan synthesis</keyword>
<keyword id="KW-1185">Reference proteome</keyword>